<accession>P68509</accession>
<accession>P11576</accession>
<accession>P70198</accession>
<accession>Q3ZC14</accession>
<proteinExistence type="evidence at protein level"/>
<protein>
    <recommendedName>
        <fullName>14-3-3 protein eta</fullName>
    </recommendedName>
    <alternativeName>
        <fullName>Protein kinase C inhibitor protein 1</fullName>
        <shortName>KCIP-1</shortName>
    </alternativeName>
</protein>
<feature type="initiator methionine" description="Removed" evidence="3">
    <location>
        <position position="1"/>
    </location>
</feature>
<feature type="chain" id="PRO_0000058622" description="14-3-3 protein eta">
    <location>
        <begin position="2"/>
        <end position="246"/>
    </location>
</feature>
<feature type="site" description="Interaction with phosphoserine on interacting protein" evidence="1">
    <location>
        <position position="57"/>
    </location>
</feature>
<feature type="site" description="Interaction with phosphoserine on interacting protein" evidence="1">
    <location>
        <position position="132"/>
    </location>
</feature>
<feature type="modified residue" description="N-acetylglycine" evidence="3">
    <location>
        <position position="2"/>
    </location>
</feature>
<feature type="modified residue" description="Phosphoserine" evidence="3">
    <location>
        <position position="25"/>
    </location>
</feature>
<feature type="modified residue" description="Phosphoserine" evidence="2">
    <location>
        <position position="59"/>
    </location>
</feature>
<feature type="sequence conflict" description="In Ref. 2; AAI02983." evidence="5" ref="2">
    <original>E</original>
    <variation>Q</variation>
    <location>
        <position position="141"/>
    </location>
</feature>
<reference key="1">
    <citation type="journal article" date="1988" name="Proc. Natl. Acad. Sci. U.S.A.">
        <title>Molecular cloning of cDNA coding for brain-specific 14-3-3 protein, a protein kinase-dependent activator of tyrosine and tryptophan hydroxylases.</title>
        <authorList>
            <person name="Ichimura T."/>
            <person name="Isobe T."/>
            <person name="Okuyama T."/>
            <person name="Takahashi N."/>
            <person name="Araki K."/>
            <person name="Kuwano R."/>
            <person name="Takahashi Y."/>
        </authorList>
    </citation>
    <scope>NUCLEOTIDE SEQUENCE [MRNA]</scope>
    <scope>PARTIAL PROTEIN SEQUENCE</scope>
    <source>
        <tissue>Cerebellum</tissue>
    </source>
</reference>
<reference key="2">
    <citation type="submission" date="2005-08" db="EMBL/GenBank/DDBJ databases">
        <authorList>
            <consortium name="NIH - Mammalian Gene Collection (MGC) project"/>
        </authorList>
    </citation>
    <scope>NUCLEOTIDE SEQUENCE [LARGE SCALE MRNA]</scope>
    <source>
        <strain>Hereford</strain>
        <tissue>Hypothalamus</tissue>
    </source>
</reference>
<reference key="3">
    <citation type="journal article" date="1990" name="Nature">
        <title>Kinase and neurotransmitters.</title>
        <authorList>
            <person name="Aitken A."/>
            <person name="Ellis C.A."/>
            <person name="Harris A."/>
            <person name="Sellers L.A."/>
            <person name="Toker A."/>
        </authorList>
    </citation>
    <scope>SIMILARITY TO KINASE INHIBITOR</scope>
</reference>
<reference key="4">
    <citation type="journal article" date="1994" name="J. Neurochem.">
        <title>Activation of protein kinase C by purified bovine brain 14-3-3: comparison with tyrosine hydroxylase activation.</title>
        <authorList>
            <person name="Tanji M."/>
            <person name="Horwitz R."/>
            <person name="Rosenfeld G."/>
            <person name="Waymire J.C."/>
        </authorList>
    </citation>
    <scope>FUNCTION</scope>
</reference>
<dbReference type="EMBL" id="J03868">
    <property type="protein sequence ID" value="AAA30347.1"/>
    <property type="molecule type" value="mRNA"/>
</dbReference>
<dbReference type="EMBL" id="BC102982">
    <property type="protein sequence ID" value="AAI02983.1"/>
    <property type="molecule type" value="mRNA"/>
</dbReference>
<dbReference type="PIR" id="A40484">
    <property type="entry name" value="A40484"/>
</dbReference>
<dbReference type="RefSeq" id="NP_776917.2">
    <property type="nucleotide sequence ID" value="NM_174492.2"/>
</dbReference>
<dbReference type="SMR" id="P68509"/>
<dbReference type="BioGRID" id="159404">
    <property type="interactions" value="1"/>
</dbReference>
<dbReference type="FunCoup" id="P68509">
    <property type="interactions" value="1390"/>
</dbReference>
<dbReference type="IntAct" id="P68509">
    <property type="interactions" value="2"/>
</dbReference>
<dbReference type="MINT" id="P68509"/>
<dbReference type="STRING" id="9913.ENSBTAP00000041575"/>
<dbReference type="PaxDb" id="9913-ENSBTAP00000041575"/>
<dbReference type="PeptideAtlas" id="P68509"/>
<dbReference type="Ensembl" id="ENSBTAT00000044059.5">
    <property type="protein sequence ID" value="ENSBTAP00000041575.4"/>
    <property type="gene ID" value="ENSBTAG00000031134.5"/>
</dbReference>
<dbReference type="GeneID" id="282126"/>
<dbReference type="KEGG" id="bta:282126"/>
<dbReference type="CTD" id="7533"/>
<dbReference type="VEuPathDB" id="HostDB:ENSBTAG00000031134"/>
<dbReference type="VGNC" id="VGNC:97330">
    <property type="gene designation" value="YWHAH"/>
</dbReference>
<dbReference type="eggNOG" id="KOG0841">
    <property type="taxonomic scope" value="Eukaryota"/>
</dbReference>
<dbReference type="GeneTree" id="ENSGT01090000260040"/>
<dbReference type="InParanoid" id="P68509"/>
<dbReference type="OMA" id="KNCDESQ"/>
<dbReference type="OrthoDB" id="10260625at2759"/>
<dbReference type="Reactome" id="R-BTA-111447">
    <property type="pathway name" value="Activation of BAD and translocation to mitochondria"/>
</dbReference>
<dbReference type="Reactome" id="R-BTA-5625740">
    <property type="pathway name" value="RHO GTPases activate PKNs"/>
</dbReference>
<dbReference type="Reactome" id="R-BTA-5628897">
    <property type="pathway name" value="TP53 Regulates Metabolic Genes"/>
</dbReference>
<dbReference type="Reactome" id="R-BTA-75035">
    <property type="pathway name" value="Chk1/Chk2(Cds1) mediated inactivation of Cyclin B:Cdk1 complex"/>
</dbReference>
<dbReference type="Proteomes" id="UP000009136">
    <property type="component" value="Chromosome 17"/>
</dbReference>
<dbReference type="Bgee" id="ENSBTAG00000031134">
    <property type="expression patterns" value="Expressed in occipital lobe and 107 other cell types or tissues"/>
</dbReference>
<dbReference type="GO" id="GO:0150048">
    <property type="term" value="C:cerebellar granule cell to Purkinje cell synapse"/>
    <property type="evidence" value="ECO:0007669"/>
    <property type="project" value="Ensembl"/>
</dbReference>
<dbReference type="GO" id="GO:0005737">
    <property type="term" value="C:cytoplasm"/>
    <property type="evidence" value="ECO:0000318"/>
    <property type="project" value="GO_Central"/>
</dbReference>
<dbReference type="GO" id="GO:0005739">
    <property type="term" value="C:mitochondrion"/>
    <property type="evidence" value="ECO:0007669"/>
    <property type="project" value="Ensembl"/>
</dbReference>
<dbReference type="GO" id="GO:0005886">
    <property type="term" value="C:plasma membrane"/>
    <property type="evidence" value="ECO:0007669"/>
    <property type="project" value="Ensembl"/>
</dbReference>
<dbReference type="GO" id="GO:0098793">
    <property type="term" value="C:presynapse"/>
    <property type="evidence" value="ECO:0007669"/>
    <property type="project" value="Ensembl"/>
</dbReference>
<dbReference type="GO" id="GO:0003779">
    <property type="term" value="F:actin binding"/>
    <property type="evidence" value="ECO:0007669"/>
    <property type="project" value="Ensembl"/>
</dbReference>
<dbReference type="GO" id="GO:0019899">
    <property type="term" value="F:enzyme binding"/>
    <property type="evidence" value="ECO:0007669"/>
    <property type="project" value="Ensembl"/>
</dbReference>
<dbReference type="GO" id="GO:0042802">
    <property type="term" value="F:identical protein binding"/>
    <property type="evidence" value="ECO:0007669"/>
    <property type="project" value="Ensembl"/>
</dbReference>
<dbReference type="GO" id="GO:0035259">
    <property type="term" value="F:nuclear glucocorticoid receptor binding"/>
    <property type="evidence" value="ECO:0007669"/>
    <property type="project" value="Ensembl"/>
</dbReference>
<dbReference type="GO" id="GO:0019904">
    <property type="term" value="F:protein domain specific binding"/>
    <property type="evidence" value="ECO:0007669"/>
    <property type="project" value="Ensembl"/>
</dbReference>
<dbReference type="GO" id="GO:0046982">
    <property type="term" value="F:protein heterodimerization activity"/>
    <property type="evidence" value="ECO:0007669"/>
    <property type="project" value="Ensembl"/>
</dbReference>
<dbReference type="GO" id="GO:0017080">
    <property type="term" value="F:sodium channel regulator activity"/>
    <property type="evidence" value="ECO:0007669"/>
    <property type="project" value="Ensembl"/>
</dbReference>
<dbReference type="GO" id="GO:0044325">
    <property type="term" value="F:transmembrane transporter binding"/>
    <property type="evidence" value="ECO:0007669"/>
    <property type="project" value="Ensembl"/>
</dbReference>
<dbReference type="GO" id="GO:0006713">
    <property type="term" value="P:glucocorticoid catabolic process"/>
    <property type="evidence" value="ECO:0007669"/>
    <property type="project" value="Ensembl"/>
</dbReference>
<dbReference type="GO" id="GO:0006886">
    <property type="term" value="P:intracellular protein transport"/>
    <property type="evidence" value="ECO:0007669"/>
    <property type="project" value="Ensembl"/>
</dbReference>
<dbReference type="GO" id="GO:0086010">
    <property type="term" value="P:membrane depolarization during action potential"/>
    <property type="evidence" value="ECO:0007669"/>
    <property type="project" value="Ensembl"/>
</dbReference>
<dbReference type="GO" id="GO:0050774">
    <property type="term" value="P:negative regulation of dendrite morphogenesis"/>
    <property type="evidence" value="ECO:0007669"/>
    <property type="project" value="Ensembl"/>
</dbReference>
<dbReference type="GO" id="GO:0042921">
    <property type="term" value="P:nuclear receptor-mediated glucocorticoid signaling pathway"/>
    <property type="evidence" value="ECO:0007669"/>
    <property type="project" value="Ensembl"/>
</dbReference>
<dbReference type="GO" id="GO:0045893">
    <property type="term" value="P:positive regulation of DNA-templated transcription"/>
    <property type="evidence" value="ECO:0007669"/>
    <property type="project" value="Ensembl"/>
</dbReference>
<dbReference type="GO" id="GO:0099171">
    <property type="term" value="P:presynaptic modulation of chemical synaptic transmission"/>
    <property type="evidence" value="ECO:0007669"/>
    <property type="project" value="Ensembl"/>
</dbReference>
<dbReference type="GO" id="GO:0008104">
    <property type="term" value="P:protein localization"/>
    <property type="evidence" value="ECO:0000318"/>
    <property type="project" value="GO_Central"/>
</dbReference>
<dbReference type="GO" id="GO:0002028">
    <property type="term" value="P:regulation of sodium ion transport"/>
    <property type="evidence" value="ECO:0007669"/>
    <property type="project" value="Ensembl"/>
</dbReference>
<dbReference type="GO" id="GO:0007165">
    <property type="term" value="P:signal transduction"/>
    <property type="evidence" value="ECO:0000318"/>
    <property type="project" value="GO_Central"/>
</dbReference>
<dbReference type="CDD" id="cd10025">
    <property type="entry name" value="14-3-3_eta"/>
    <property type="match status" value="1"/>
</dbReference>
<dbReference type="FunFam" id="1.20.190.20:FF:000001">
    <property type="entry name" value="14-3-3 gamma 1"/>
    <property type="match status" value="1"/>
</dbReference>
<dbReference type="Gene3D" id="1.20.190.20">
    <property type="entry name" value="14-3-3 domain"/>
    <property type="match status" value="1"/>
</dbReference>
<dbReference type="InterPro" id="IPR000308">
    <property type="entry name" value="14-3-3"/>
</dbReference>
<dbReference type="InterPro" id="IPR023409">
    <property type="entry name" value="14-3-3_CS"/>
</dbReference>
<dbReference type="InterPro" id="IPR036815">
    <property type="entry name" value="14-3-3_dom_sf"/>
</dbReference>
<dbReference type="InterPro" id="IPR023410">
    <property type="entry name" value="14-3-3_domain"/>
</dbReference>
<dbReference type="PANTHER" id="PTHR18860">
    <property type="entry name" value="14-3-3 PROTEIN"/>
    <property type="match status" value="1"/>
</dbReference>
<dbReference type="Pfam" id="PF00244">
    <property type="entry name" value="14-3-3"/>
    <property type="match status" value="1"/>
</dbReference>
<dbReference type="PIRSF" id="PIRSF000868">
    <property type="entry name" value="14-3-3"/>
    <property type="match status" value="1"/>
</dbReference>
<dbReference type="PRINTS" id="PR00305">
    <property type="entry name" value="1433ZETA"/>
</dbReference>
<dbReference type="SMART" id="SM00101">
    <property type="entry name" value="14_3_3"/>
    <property type="match status" value="1"/>
</dbReference>
<dbReference type="SUPFAM" id="SSF48445">
    <property type="entry name" value="14-3-3 protein"/>
    <property type="match status" value="1"/>
</dbReference>
<dbReference type="PROSITE" id="PS00796">
    <property type="entry name" value="1433_1"/>
    <property type="match status" value="1"/>
</dbReference>
<dbReference type="PROSITE" id="PS00797">
    <property type="entry name" value="1433_2"/>
    <property type="match status" value="1"/>
</dbReference>
<name>1433F_BOVIN</name>
<organism>
    <name type="scientific">Bos taurus</name>
    <name type="common">Bovine</name>
    <dbReference type="NCBI Taxonomy" id="9913"/>
    <lineage>
        <taxon>Eukaryota</taxon>
        <taxon>Metazoa</taxon>
        <taxon>Chordata</taxon>
        <taxon>Craniata</taxon>
        <taxon>Vertebrata</taxon>
        <taxon>Euteleostomi</taxon>
        <taxon>Mammalia</taxon>
        <taxon>Eutheria</taxon>
        <taxon>Laurasiatheria</taxon>
        <taxon>Artiodactyla</taxon>
        <taxon>Ruminantia</taxon>
        <taxon>Pecora</taxon>
        <taxon>Bovidae</taxon>
        <taxon>Bovinae</taxon>
        <taxon>Bos</taxon>
    </lineage>
</organism>
<gene>
    <name type="primary">YWHAH</name>
</gene>
<evidence type="ECO:0000250" key="1"/>
<evidence type="ECO:0000250" key="2">
    <source>
        <dbReference type="UniProtKB" id="P68510"/>
    </source>
</evidence>
<evidence type="ECO:0000250" key="3">
    <source>
        <dbReference type="UniProtKB" id="Q04917"/>
    </source>
</evidence>
<evidence type="ECO:0000269" key="4">
    <source>
    </source>
</evidence>
<evidence type="ECO:0000305" key="5"/>
<comment type="function">
    <text evidence="1 4">Adapter protein implicated in the regulation of a large spectrum of both general and specialized signaling pathways. Binds to a large number of partners, usually by recognition of a phosphoserine or phosphothreonine motif. Binding generally results in the modulation of the activity of the binding partner. Negatively regulates the kinase activity of PDPK1 (By similarity).</text>
</comment>
<comment type="subunit">
    <text evidence="1 2 3">Homodimer (By similarity). Interacts with many nuclear hormone receptors and cofactors including AR, ESR1, ESR2, MC2R, NR3C1, NRIP1, PPARBP and THRA. Interacts with ABL1 (phosphorylated form); the interaction retains it in the cytoplasm. Weakly interacts with CDKN1B. Interacts with ARHGEF28 and CDK16. Interacts with GAB2 (By similarity). Interacts with KCNK18 in a phosphorylation-dependent manner. Interacts with SAMSN1 (By similarity). Interacts with the 'Ser-241' phosphorylated form of PDPK1 (By similarity). Interacts with the 'Thr-369' phosphorylated form of DAPK2 (By similarity). Interacts with PI4KB, TBC1D22A and TBC1D22B (By similarity). Interacts with SLITRK1 (By similarity). Interacts with MEFV (By similarity).</text>
</comment>
<comment type="subcellular location">
    <subcellularLocation>
        <location>Cytoplasm</location>
    </subcellularLocation>
</comment>
<comment type="PTM">
    <text evidence="1">Phosphorylated on Ser-59 by protein kinase C delta type catalytic subunit in a sphingosine-dependent fashion.</text>
</comment>
<comment type="similarity">
    <text evidence="5">Belongs to the 14-3-3 family.</text>
</comment>
<keyword id="KW-0007">Acetylation</keyword>
<keyword id="KW-0963">Cytoplasm</keyword>
<keyword id="KW-0903">Direct protein sequencing</keyword>
<keyword id="KW-0597">Phosphoprotein</keyword>
<keyword id="KW-1185">Reference proteome</keyword>
<sequence length="246" mass="28212">MGDREQLLQRARLAEQAERYDDMASAMKAVTELNEPLSNEDRNLLSVAYKNVVGARRSSWRVISSIEQKTMADGNEKKLEKVKAYREKIEKELETVCNDVLALLDKFLIKNCNDFQYESKVFYLKMKGDYYRYLAEVASGEKKNSVVEASEAAYKEAFEISKEHMQPTHPIRLGLALNFSVFYYEIQNAPEQACLLAKQAFDDAIAELDTLNEDSYKDSTLIMQLLRDNLTLWTSDQQDEEAGEGN</sequence>